<dbReference type="EMBL" id="CP000109">
    <property type="protein sequence ID" value="ABB40893.1"/>
    <property type="molecule type" value="Genomic_DNA"/>
</dbReference>
<dbReference type="SMR" id="Q31IY0"/>
<dbReference type="STRING" id="317025.Tcr_0297"/>
<dbReference type="KEGG" id="tcx:Tcr_0297"/>
<dbReference type="eggNOG" id="COG0089">
    <property type="taxonomic scope" value="Bacteria"/>
</dbReference>
<dbReference type="HOGENOM" id="CLU_037562_3_1_6"/>
<dbReference type="OrthoDB" id="9793353at2"/>
<dbReference type="GO" id="GO:1990904">
    <property type="term" value="C:ribonucleoprotein complex"/>
    <property type="evidence" value="ECO:0007669"/>
    <property type="project" value="UniProtKB-KW"/>
</dbReference>
<dbReference type="GO" id="GO:0005840">
    <property type="term" value="C:ribosome"/>
    <property type="evidence" value="ECO:0007669"/>
    <property type="project" value="UniProtKB-KW"/>
</dbReference>
<dbReference type="GO" id="GO:0019843">
    <property type="term" value="F:rRNA binding"/>
    <property type="evidence" value="ECO:0007669"/>
    <property type="project" value="UniProtKB-UniRule"/>
</dbReference>
<dbReference type="GO" id="GO:0003735">
    <property type="term" value="F:structural constituent of ribosome"/>
    <property type="evidence" value="ECO:0007669"/>
    <property type="project" value="InterPro"/>
</dbReference>
<dbReference type="GO" id="GO:0006412">
    <property type="term" value="P:translation"/>
    <property type="evidence" value="ECO:0007669"/>
    <property type="project" value="UniProtKB-UniRule"/>
</dbReference>
<dbReference type="FunFam" id="3.30.70.330:FF:000001">
    <property type="entry name" value="50S ribosomal protein L23"/>
    <property type="match status" value="1"/>
</dbReference>
<dbReference type="Gene3D" id="3.30.70.330">
    <property type="match status" value="1"/>
</dbReference>
<dbReference type="HAMAP" id="MF_01369_B">
    <property type="entry name" value="Ribosomal_uL23_B"/>
    <property type="match status" value="1"/>
</dbReference>
<dbReference type="InterPro" id="IPR012677">
    <property type="entry name" value="Nucleotide-bd_a/b_plait_sf"/>
</dbReference>
<dbReference type="InterPro" id="IPR013025">
    <property type="entry name" value="Ribosomal_uL23-like"/>
</dbReference>
<dbReference type="InterPro" id="IPR012678">
    <property type="entry name" value="Ribosomal_uL23/eL15/eS24_sf"/>
</dbReference>
<dbReference type="InterPro" id="IPR001014">
    <property type="entry name" value="Ribosomal_uL23_CS"/>
</dbReference>
<dbReference type="NCBIfam" id="NF004359">
    <property type="entry name" value="PRK05738.1-3"/>
    <property type="match status" value="1"/>
</dbReference>
<dbReference type="NCBIfam" id="NF004363">
    <property type="entry name" value="PRK05738.2-4"/>
    <property type="match status" value="1"/>
</dbReference>
<dbReference type="PANTHER" id="PTHR11620">
    <property type="entry name" value="60S RIBOSOMAL PROTEIN L23A"/>
    <property type="match status" value="1"/>
</dbReference>
<dbReference type="Pfam" id="PF00276">
    <property type="entry name" value="Ribosomal_L23"/>
    <property type="match status" value="1"/>
</dbReference>
<dbReference type="SUPFAM" id="SSF54189">
    <property type="entry name" value="Ribosomal proteins S24e, L23 and L15e"/>
    <property type="match status" value="1"/>
</dbReference>
<dbReference type="PROSITE" id="PS00050">
    <property type="entry name" value="RIBOSOMAL_L23"/>
    <property type="match status" value="1"/>
</dbReference>
<sequence>MSKERLLKVLLAPHVSEKSALLADASEQYIFKVVPNATKPEVKQAVESLFDVKVQSVNMINIKGKTKVFKGRVGKRNGLRKAIVRLAPGQEIDFVGAE</sequence>
<feature type="chain" id="PRO_0000272865" description="Large ribosomal subunit protein uL23">
    <location>
        <begin position="1"/>
        <end position="98"/>
    </location>
</feature>
<accession>Q31IY0</accession>
<comment type="function">
    <text evidence="1">One of the early assembly proteins it binds 23S rRNA. One of the proteins that surrounds the polypeptide exit tunnel on the outside of the ribosome. Forms the main docking site for trigger factor binding to the ribosome.</text>
</comment>
<comment type="subunit">
    <text evidence="1">Part of the 50S ribosomal subunit. Contacts protein L29, and trigger factor when it is bound to the ribosome.</text>
</comment>
<comment type="similarity">
    <text evidence="1">Belongs to the universal ribosomal protein uL23 family.</text>
</comment>
<name>RL23_HYDCU</name>
<evidence type="ECO:0000255" key="1">
    <source>
        <dbReference type="HAMAP-Rule" id="MF_01369"/>
    </source>
</evidence>
<evidence type="ECO:0000305" key="2"/>
<gene>
    <name evidence="1" type="primary">rplW</name>
    <name type="ordered locus">Tcr_0297</name>
</gene>
<proteinExistence type="inferred from homology"/>
<organism>
    <name type="scientific">Hydrogenovibrio crunogenus (strain DSM 25203 / XCL-2)</name>
    <name type="common">Thiomicrospira crunogena</name>
    <dbReference type="NCBI Taxonomy" id="317025"/>
    <lineage>
        <taxon>Bacteria</taxon>
        <taxon>Pseudomonadati</taxon>
        <taxon>Pseudomonadota</taxon>
        <taxon>Gammaproteobacteria</taxon>
        <taxon>Thiotrichales</taxon>
        <taxon>Piscirickettsiaceae</taxon>
        <taxon>Hydrogenovibrio</taxon>
    </lineage>
</organism>
<protein>
    <recommendedName>
        <fullName evidence="1">Large ribosomal subunit protein uL23</fullName>
    </recommendedName>
    <alternativeName>
        <fullName evidence="2">50S ribosomal protein L23</fullName>
    </alternativeName>
</protein>
<reference key="1">
    <citation type="journal article" date="2006" name="PLoS Biol.">
        <title>The genome of deep-sea vent chemolithoautotroph Thiomicrospira crunogena XCL-2.</title>
        <authorList>
            <person name="Scott K.M."/>
            <person name="Sievert S.M."/>
            <person name="Abril F.N."/>
            <person name="Ball L.A."/>
            <person name="Barrett C.J."/>
            <person name="Blake R.A."/>
            <person name="Boller A.J."/>
            <person name="Chain P.S.G."/>
            <person name="Clark J.A."/>
            <person name="Davis C.R."/>
            <person name="Detter C."/>
            <person name="Do K.F."/>
            <person name="Dobrinski K.P."/>
            <person name="Faza B.I."/>
            <person name="Fitzpatrick K.A."/>
            <person name="Freyermuth S.K."/>
            <person name="Harmer T.L."/>
            <person name="Hauser L.J."/>
            <person name="Huegler M."/>
            <person name="Kerfeld C.A."/>
            <person name="Klotz M.G."/>
            <person name="Kong W.W."/>
            <person name="Land M."/>
            <person name="Lapidus A."/>
            <person name="Larimer F.W."/>
            <person name="Longo D.L."/>
            <person name="Lucas S."/>
            <person name="Malfatti S.A."/>
            <person name="Massey S.E."/>
            <person name="Martin D.D."/>
            <person name="McCuddin Z."/>
            <person name="Meyer F."/>
            <person name="Moore J.L."/>
            <person name="Ocampo L.H. Jr."/>
            <person name="Paul J.H."/>
            <person name="Paulsen I.T."/>
            <person name="Reep D.K."/>
            <person name="Ren Q."/>
            <person name="Ross R.L."/>
            <person name="Sato P.Y."/>
            <person name="Thomas P."/>
            <person name="Tinkham L.E."/>
            <person name="Zeruth G.T."/>
        </authorList>
    </citation>
    <scope>NUCLEOTIDE SEQUENCE [LARGE SCALE GENOMIC DNA]</scope>
    <source>
        <strain>DSM 25203 / XCL-2</strain>
    </source>
</reference>
<keyword id="KW-0687">Ribonucleoprotein</keyword>
<keyword id="KW-0689">Ribosomal protein</keyword>
<keyword id="KW-0694">RNA-binding</keyword>
<keyword id="KW-0699">rRNA-binding</keyword>